<organism>
    <name type="scientific">Pelobacter propionicus (strain DSM 2379 / NBRC 103807 / OttBd1)</name>
    <dbReference type="NCBI Taxonomy" id="338966"/>
    <lineage>
        <taxon>Bacteria</taxon>
        <taxon>Pseudomonadati</taxon>
        <taxon>Thermodesulfobacteriota</taxon>
        <taxon>Desulfuromonadia</taxon>
        <taxon>Desulfuromonadales</taxon>
        <taxon>Desulfuromonadaceae</taxon>
        <taxon>Pelobacter</taxon>
    </lineage>
</organism>
<gene>
    <name evidence="1" type="primary">sucC</name>
    <name type="ordered locus">Ppro_1716</name>
</gene>
<protein>
    <recommendedName>
        <fullName evidence="1">Succinate--CoA ligase [ADP-forming] subunit beta</fullName>
        <ecNumber evidence="1">6.2.1.5</ecNumber>
    </recommendedName>
    <alternativeName>
        <fullName evidence="1">Succinyl-CoA synthetase subunit beta</fullName>
        <shortName evidence="1">SCS-beta</shortName>
    </alternativeName>
</protein>
<evidence type="ECO:0000255" key="1">
    <source>
        <dbReference type="HAMAP-Rule" id="MF_00558"/>
    </source>
</evidence>
<keyword id="KW-0067">ATP-binding</keyword>
<keyword id="KW-0436">Ligase</keyword>
<keyword id="KW-0460">Magnesium</keyword>
<keyword id="KW-0479">Metal-binding</keyword>
<keyword id="KW-0547">Nucleotide-binding</keyword>
<keyword id="KW-1185">Reference proteome</keyword>
<keyword id="KW-0816">Tricarboxylic acid cycle</keyword>
<feature type="chain" id="PRO_1000082154" description="Succinate--CoA ligase [ADP-forming] subunit beta">
    <location>
        <begin position="1"/>
        <end position="394"/>
    </location>
</feature>
<feature type="domain" description="ATP-grasp" evidence="1">
    <location>
        <begin position="9"/>
        <end position="243"/>
    </location>
</feature>
<feature type="binding site" evidence="1">
    <location>
        <position position="45"/>
    </location>
    <ligand>
        <name>ATP</name>
        <dbReference type="ChEBI" id="CHEBI:30616"/>
    </ligand>
</feature>
<feature type="binding site" evidence="1">
    <location>
        <begin position="52"/>
        <end position="54"/>
    </location>
    <ligand>
        <name>ATP</name>
        <dbReference type="ChEBI" id="CHEBI:30616"/>
    </ligand>
</feature>
<feature type="binding site" evidence="1">
    <location>
        <position position="98"/>
    </location>
    <ligand>
        <name>ATP</name>
        <dbReference type="ChEBI" id="CHEBI:30616"/>
    </ligand>
</feature>
<feature type="binding site" evidence="1">
    <location>
        <position position="101"/>
    </location>
    <ligand>
        <name>ATP</name>
        <dbReference type="ChEBI" id="CHEBI:30616"/>
    </ligand>
</feature>
<feature type="binding site" evidence="1">
    <location>
        <position position="106"/>
    </location>
    <ligand>
        <name>ATP</name>
        <dbReference type="ChEBI" id="CHEBI:30616"/>
    </ligand>
</feature>
<feature type="binding site" evidence="1">
    <location>
        <position position="198"/>
    </location>
    <ligand>
        <name>Mg(2+)</name>
        <dbReference type="ChEBI" id="CHEBI:18420"/>
    </ligand>
</feature>
<feature type="binding site" evidence="1">
    <location>
        <position position="212"/>
    </location>
    <ligand>
        <name>Mg(2+)</name>
        <dbReference type="ChEBI" id="CHEBI:18420"/>
    </ligand>
</feature>
<feature type="binding site" evidence="1">
    <location>
        <position position="263"/>
    </location>
    <ligand>
        <name>substrate</name>
        <note>ligand shared with subunit alpha</note>
    </ligand>
</feature>
<feature type="binding site" evidence="1">
    <location>
        <begin position="320"/>
        <end position="322"/>
    </location>
    <ligand>
        <name>substrate</name>
        <note>ligand shared with subunit alpha</note>
    </ligand>
</feature>
<comment type="function">
    <text evidence="1">Succinyl-CoA synthetase functions in the citric acid cycle (TCA), coupling the hydrolysis of succinyl-CoA to the synthesis of either ATP or GTP and thus represents the only step of substrate-level phosphorylation in the TCA. The beta subunit provides nucleotide specificity of the enzyme and binds the substrate succinate, while the binding sites for coenzyme A and phosphate are found in the alpha subunit.</text>
</comment>
<comment type="catalytic activity">
    <reaction evidence="1">
        <text>succinate + ATP + CoA = succinyl-CoA + ADP + phosphate</text>
        <dbReference type="Rhea" id="RHEA:17661"/>
        <dbReference type="ChEBI" id="CHEBI:30031"/>
        <dbReference type="ChEBI" id="CHEBI:30616"/>
        <dbReference type="ChEBI" id="CHEBI:43474"/>
        <dbReference type="ChEBI" id="CHEBI:57287"/>
        <dbReference type="ChEBI" id="CHEBI:57292"/>
        <dbReference type="ChEBI" id="CHEBI:456216"/>
        <dbReference type="EC" id="6.2.1.5"/>
    </reaction>
    <physiologicalReaction direction="right-to-left" evidence="1">
        <dbReference type="Rhea" id="RHEA:17663"/>
    </physiologicalReaction>
</comment>
<comment type="catalytic activity">
    <reaction evidence="1">
        <text>GTP + succinate + CoA = succinyl-CoA + GDP + phosphate</text>
        <dbReference type="Rhea" id="RHEA:22120"/>
        <dbReference type="ChEBI" id="CHEBI:30031"/>
        <dbReference type="ChEBI" id="CHEBI:37565"/>
        <dbReference type="ChEBI" id="CHEBI:43474"/>
        <dbReference type="ChEBI" id="CHEBI:57287"/>
        <dbReference type="ChEBI" id="CHEBI:57292"/>
        <dbReference type="ChEBI" id="CHEBI:58189"/>
    </reaction>
    <physiologicalReaction direction="right-to-left" evidence="1">
        <dbReference type="Rhea" id="RHEA:22122"/>
    </physiologicalReaction>
</comment>
<comment type="cofactor">
    <cofactor evidence="1">
        <name>Mg(2+)</name>
        <dbReference type="ChEBI" id="CHEBI:18420"/>
    </cofactor>
    <text evidence="1">Binds 1 Mg(2+) ion per subunit.</text>
</comment>
<comment type="pathway">
    <text evidence="1">Carbohydrate metabolism; tricarboxylic acid cycle; succinate from succinyl-CoA (ligase route): step 1/1.</text>
</comment>
<comment type="subunit">
    <text evidence="1">Heterotetramer of two alpha and two beta subunits.</text>
</comment>
<comment type="similarity">
    <text evidence="1">Belongs to the succinate/malate CoA ligase beta subunit family.</text>
</comment>
<accession>A1APQ8</accession>
<dbReference type="EC" id="6.2.1.5" evidence="1"/>
<dbReference type="EMBL" id="CP000482">
    <property type="protein sequence ID" value="ABK99328.1"/>
    <property type="molecule type" value="Genomic_DNA"/>
</dbReference>
<dbReference type="RefSeq" id="WP_011735605.1">
    <property type="nucleotide sequence ID" value="NC_008609.1"/>
</dbReference>
<dbReference type="SMR" id="A1APQ8"/>
<dbReference type="STRING" id="338966.Ppro_1716"/>
<dbReference type="KEGG" id="ppd:Ppro_1716"/>
<dbReference type="eggNOG" id="COG0045">
    <property type="taxonomic scope" value="Bacteria"/>
</dbReference>
<dbReference type="HOGENOM" id="CLU_037430_0_2_7"/>
<dbReference type="OrthoDB" id="9802602at2"/>
<dbReference type="UniPathway" id="UPA00223">
    <property type="reaction ID" value="UER00999"/>
</dbReference>
<dbReference type="Proteomes" id="UP000006732">
    <property type="component" value="Chromosome"/>
</dbReference>
<dbReference type="GO" id="GO:0005829">
    <property type="term" value="C:cytosol"/>
    <property type="evidence" value="ECO:0007669"/>
    <property type="project" value="TreeGrafter"/>
</dbReference>
<dbReference type="GO" id="GO:0042709">
    <property type="term" value="C:succinate-CoA ligase complex"/>
    <property type="evidence" value="ECO:0007669"/>
    <property type="project" value="TreeGrafter"/>
</dbReference>
<dbReference type="GO" id="GO:0005524">
    <property type="term" value="F:ATP binding"/>
    <property type="evidence" value="ECO:0007669"/>
    <property type="project" value="UniProtKB-UniRule"/>
</dbReference>
<dbReference type="GO" id="GO:0000287">
    <property type="term" value="F:magnesium ion binding"/>
    <property type="evidence" value="ECO:0007669"/>
    <property type="project" value="UniProtKB-UniRule"/>
</dbReference>
<dbReference type="GO" id="GO:0004775">
    <property type="term" value="F:succinate-CoA ligase (ADP-forming) activity"/>
    <property type="evidence" value="ECO:0007669"/>
    <property type="project" value="UniProtKB-UniRule"/>
</dbReference>
<dbReference type="GO" id="GO:0004776">
    <property type="term" value="F:succinate-CoA ligase (GDP-forming) activity"/>
    <property type="evidence" value="ECO:0007669"/>
    <property type="project" value="RHEA"/>
</dbReference>
<dbReference type="GO" id="GO:0006104">
    <property type="term" value="P:succinyl-CoA metabolic process"/>
    <property type="evidence" value="ECO:0007669"/>
    <property type="project" value="TreeGrafter"/>
</dbReference>
<dbReference type="GO" id="GO:0006099">
    <property type="term" value="P:tricarboxylic acid cycle"/>
    <property type="evidence" value="ECO:0007669"/>
    <property type="project" value="UniProtKB-UniRule"/>
</dbReference>
<dbReference type="FunFam" id="3.30.1490.20:FF:000002">
    <property type="entry name" value="Succinate--CoA ligase [ADP-forming] subunit beta"/>
    <property type="match status" value="1"/>
</dbReference>
<dbReference type="FunFam" id="3.30.470.20:FF:000002">
    <property type="entry name" value="Succinate--CoA ligase [ADP-forming] subunit beta"/>
    <property type="match status" value="1"/>
</dbReference>
<dbReference type="FunFam" id="3.40.50.261:FF:000001">
    <property type="entry name" value="Succinate--CoA ligase [ADP-forming] subunit beta"/>
    <property type="match status" value="1"/>
</dbReference>
<dbReference type="Gene3D" id="3.30.1490.20">
    <property type="entry name" value="ATP-grasp fold, A domain"/>
    <property type="match status" value="1"/>
</dbReference>
<dbReference type="Gene3D" id="3.30.470.20">
    <property type="entry name" value="ATP-grasp fold, B domain"/>
    <property type="match status" value="1"/>
</dbReference>
<dbReference type="Gene3D" id="3.40.50.261">
    <property type="entry name" value="Succinyl-CoA synthetase domains"/>
    <property type="match status" value="1"/>
</dbReference>
<dbReference type="HAMAP" id="MF_00558">
    <property type="entry name" value="Succ_CoA_beta"/>
    <property type="match status" value="1"/>
</dbReference>
<dbReference type="InterPro" id="IPR011761">
    <property type="entry name" value="ATP-grasp"/>
</dbReference>
<dbReference type="InterPro" id="IPR013650">
    <property type="entry name" value="ATP-grasp_succ-CoA_synth-type"/>
</dbReference>
<dbReference type="InterPro" id="IPR013815">
    <property type="entry name" value="ATP_grasp_subdomain_1"/>
</dbReference>
<dbReference type="InterPro" id="IPR017866">
    <property type="entry name" value="Succ-CoA_synthase_bsu_CS"/>
</dbReference>
<dbReference type="InterPro" id="IPR005811">
    <property type="entry name" value="SUCC_ACL_C"/>
</dbReference>
<dbReference type="InterPro" id="IPR005809">
    <property type="entry name" value="Succ_CoA_ligase-like_bsu"/>
</dbReference>
<dbReference type="InterPro" id="IPR016102">
    <property type="entry name" value="Succinyl-CoA_synth-like"/>
</dbReference>
<dbReference type="NCBIfam" id="NF001913">
    <property type="entry name" value="PRK00696.1"/>
    <property type="match status" value="1"/>
</dbReference>
<dbReference type="NCBIfam" id="TIGR01016">
    <property type="entry name" value="sucCoAbeta"/>
    <property type="match status" value="1"/>
</dbReference>
<dbReference type="PANTHER" id="PTHR11815:SF10">
    <property type="entry name" value="SUCCINATE--COA LIGASE [GDP-FORMING] SUBUNIT BETA, MITOCHONDRIAL"/>
    <property type="match status" value="1"/>
</dbReference>
<dbReference type="PANTHER" id="PTHR11815">
    <property type="entry name" value="SUCCINYL-COA SYNTHETASE BETA CHAIN"/>
    <property type="match status" value="1"/>
</dbReference>
<dbReference type="Pfam" id="PF08442">
    <property type="entry name" value="ATP-grasp_2"/>
    <property type="match status" value="1"/>
</dbReference>
<dbReference type="Pfam" id="PF00549">
    <property type="entry name" value="Ligase_CoA"/>
    <property type="match status" value="1"/>
</dbReference>
<dbReference type="PIRSF" id="PIRSF001554">
    <property type="entry name" value="SucCS_beta"/>
    <property type="match status" value="1"/>
</dbReference>
<dbReference type="SUPFAM" id="SSF56059">
    <property type="entry name" value="Glutathione synthetase ATP-binding domain-like"/>
    <property type="match status" value="1"/>
</dbReference>
<dbReference type="SUPFAM" id="SSF52210">
    <property type="entry name" value="Succinyl-CoA synthetase domains"/>
    <property type="match status" value="1"/>
</dbReference>
<dbReference type="PROSITE" id="PS50975">
    <property type="entry name" value="ATP_GRASP"/>
    <property type="match status" value="1"/>
</dbReference>
<dbReference type="PROSITE" id="PS01217">
    <property type="entry name" value="SUCCINYL_COA_LIG_3"/>
    <property type="match status" value="1"/>
</dbReference>
<reference key="1">
    <citation type="submission" date="2006-10" db="EMBL/GenBank/DDBJ databases">
        <title>Complete sequence of chromosome of Pelobacter propionicus DSM 2379.</title>
        <authorList>
            <consortium name="US DOE Joint Genome Institute"/>
            <person name="Copeland A."/>
            <person name="Lucas S."/>
            <person name="Lapidus A."/>
            <person name="Barry K."/>
            <person name="Detter J.C."/>
            <person name="Glavina del Rio T."/>
            <person name="Hammon N."/>
            <person name="Israni S."/>
            <person name="Dalin E."/>
            <person name="Tice H."/>
            <person name="Pitluck S."/>
            <person name="Saunders E."/>
            <person name="Brettin T."/>
            <person name="Bruce D."/>
            <person name="Han C."/>
            <person name="Tapia R."/>
            <person name="Schmutz J."/>
            <person name="Larimer F."/>
            <person name="Land M."/>
            <person name="Hauser L."/>
            <person name="Kyrpides N."/>
            <person name="Kim E."/>
            <person name="Lovley D."/>
            <person name="Richardson P."/>
        </authorList>
    </citation>
    <scope>NUCLEOTIDE SEQUENCE [LARGE SCALE GENOMIC DNA]</scope>
    <source>
        <strain>DSM 2379 / NBRC 103807 / OttBd1</strain>
    </source>
</reference>
<proteinExistence type="inferred from homology"/>
<name>SUCC_PELPD</name>
<sequence>MKIHEYQAKDILAGFGIAIPRGRVAMNASQVERAARELGGHCVIKAQVYAGGRGKGGGIRVAQDPGQAGEIAKELLGTKLVTPQTGPEGLEVRRLLVEEVVDIERELYLSITLDRESSRYCLIASAEGGMDIEEIARTAPDRIRILTIDPFIGLRSYQARRTALGLGLVGPLCEECVELILNLYRCLLERDCSLVEINPLVVTNAGWLVAMDTKMTFDDNALQRHCEYPDLVDYSQLNPLEIAAARFDLSYIKLSGAIGCMVNGAGLAMATLDVLKEAGGEPANFLDVGGGASREKVAEAFRIILQDRDVRGVFVNIFGGIMRCDIIAQGIIDAASGGGCRLPIVVRMDGNRVEEGKQLLRESGLNIRIGENMGDGAQQIVAMLNREVNQPCQS</sequence>